<keyword id="KW-0963">Cytoplasm</keyword>
<keyword id="KW-0227">DNA damage</keyword>
<keyword id="KW-0233">DNA recombination</keyword>
<keyword id="KW-0234">DNA repair</keyword>
<keyword id="KW-0238">DNA-binding</keyword>
<keyword id="KW-1185">Reference proteome</keyword>
<name>RUVA_STRPN</name>
<evidence type="ECO:0000255" key="1">
    <source>
        <dbReference type="HAMAP-Rule" id="MF_00031"/>
    </source>
</evidence>
<protein>
    <recommendedName>
        <fullName evidence="1">Holliday junction branch migration complex subunit RuvA</fullName>
    </recommendedName>
</protein>
<feature type="chain" id="PRO_0000094691" description="Holliday junction branch migration complex subunit RuvA">
    <location>
        <begin position="1"/>
        <end position="197"/>
    </location>
</feature>
<feature type="region of interest" description="Domain I" evidence="1">
    <location>
        <begin position="1"/>
        <end position="63"/>
    </location>
</feature>
<feature type="region of interest" description="Domain II" evidence="1">
    <location>
        <begin position="64"/>
        <end position="142"/>
    </location>
</feature>
<feature type="region of interest" description="Flexible linker" evidence="1">
    <location>
        <begin position="143"/>
        <end position="147"/>
    </location>
</feature>
<feature type="region of interest" description="Domain III" evidence="1">
    <location>
        <begin position="148"/>
        <end position="197"/>
    </location>
</feature>
<gene>
    <name evidence="1" type="primary">ruvA</name>
    <name type="ordered locus">SP_0179</name>
</gene>
<sequence>MYAYLKGIITKITAKYIVLETNGIGYILHVANPYAYSGQVNQEAQIYVHQVVREDAHLLYGFRSEDEKKLFLSLISVSGIGPVSALAIIAADDNAGLVQAIETKNITYLTKFPKIGKKTAQQMVLDLEGKVVVAGDDLPAKVAVQASAENQELEEAMEAMLALGYKATELKKIKKFFEGTTDTAENYIKSALKMLVK</sequence>
<reference key="1">
    <citation type="journal article" date="2001" name="Science">
        <title>Complete genome sequence of a virulent isolate of Streptococcus pneumoniae.</title>
        <authorList>
            <person name="Tettelin H."/>
            <person name="Nelson K.E."/>
            <person name="Paulsen I.T."/>
            <person name="Eisen J.A."/>
            <person name="Read T.D."/>
            <person name="Peterson S.N."/>
            <person name="Heidelberg J.F."/>
            <person name="DeBoy R.T."/>
            <person name="Haft D.H."/>
            <person name="Dodson R.J."/>
            <person name="Durkin A.S."/>
            <person name="Gwinn M.L."/>
            <person name="Kolonay J.F."/>
            <person name="Nelson W.C."/>
            <person name="Peterson J.D."/>
            <person name="Umayam L.A."/>
            <person name="White O."/>
            <person name="Salzberg S.L."/>
            <person name="Lewis M.R."/>
            <person name="Radune D."/>
            <person name="Holtzapple E.K."/>
            <person name="Khouri H.M."/>
            <person name="Wolf A.M."/>
            <person name="Utterback T.R."/>
            <person name="Hansen C.L."/>
            <person name="McDonald L.A."/>
            <person name="Feldblyum T.V."/>
            <person name="Angiuoli S.V."/>
            <person name="Dickinson T."/>
            <person name="Hickey E.K."/>
            <person name="Holt I.E."/>
            <person name="Loftus B.J."/>
            <person name="Yang F."/>
            <person name="Smith H.O."/>
            <person name="Venter J.C."/>
            <person name="Dougherty B.A."/>
            <person name="Morrison D.A."/>
            <person name="Hollingshead S.K."/>
            <person name="Fraser C.M."/>
        </authorList>
    </citation>
    <scope>NUCLEOTIDE SEQUENCE [LARGE SCALE GENOMIC DNA]</scope>
    <source>
        <strain>ATCC BAA-334 / TIGR4</strain>
    </source>
</reference>
<accession>Q97SY4</accession>
<comment type="function">
    <text evidence="1">The RuvA-RuvB-RuvC complex processes Holliday junction (HJ) DNA during genetic recombination and DNA repair, while the RuvA-RuvB complex plays an important role in the rescue of blocked DNA replication forks via replication fork reversal (RFR). RuvA specifically binds to HJ cruciform DNA, conferring on it an open structure. The RuvB hexamer acts as an ATP-dependent pump, pulling dsDNA into and through the RuvAB complex. HJ branch migration allows RuvC to scan DNA until it finds its consensus sequence, where it cleaves and resolves the cruciform DNA.</text>
</comment>
<comment type="subunit">
    <text evidence="1">Homotetramer. Forms an RuvA(8)-RuvB(12)-Holliday junction (HJ) complex. HJ DNA is sandwiched between 2 RuvA tetramers; dsDNA enters through RuvA and exits via RuvB. An RuvB hexamer assembles on each DNA strand where it exits the tetramer. Each RuvB hexamer is contacted by two RuvA subunits (via domain III) on 2 adjacent RuvB subunits; this complex drives branch migration. In the full resolvosome a probable DNA-RuvA(4)-RuvB(12)-RuvC(2) complex forms which resolves the HJ.</text>
</comment>
<comment type="subcellular location">
    <subcellularLocation>
        <location evidence="1">Cytoplasm</location>
    </subcellularLocation>
</comment>
<comment type="domain">
    <text evidence="1">Has three domains with a flexible linker between the domains II and III and assumes an 'L' shape. Domain III is highly mobile and contacts RuvB.</text>
</comment>
<comment type="similarity">
    <text evidence="1">Belongs to the RuvA family.</text>
</comment>
<proteinExistence type="inferred from homology"/>
<organism>
    <name type="scientific">Streptococcus pneumoniae serotype 4 (strain ATCC BAA-334 / TIGR4)</name>
    <dbReference type="NCBI Taxonomy" id="170187"/>
    <lineage>
        <taxon>Bacteria</taxon>
        <taxon>Bacillati</taxon>
        <taxon>Bacillota</taxon>
        <taxon>Bacilli</taxon>
        <taxon>Lactobacillales</taxon>
        <taxon>Streptococcaceae</taxon>
        <taxon>Streptococcus</taxon>
    </lineage>
</organism>
<dbReference type="EMBL" id="AE005672">
    <property type="protein sequence ID" value="AAK74360.1"/>
    <property type="molecule type" value="Genomic_DNA"/>
</dbReference>
<dbReference type="PIR" id="G95020">
    <property type="entry name" value="G95020"/>
</dbReference>
<dbReference type="RefSeq" id="WP_000271487.1">
    <property type="nucleotide sequence ID" value="NZ_CP155539.1"/>
</dbReference>
<dbReference type="SMR" id="Q97SY4"/>
<dbReference type="PaxDb" id="170187-SP_0179"/>
<dbReference type="EnsemblBacteria" id="AAK74360">
    <property type="protein sequence ID" value="AAK74360"/>
    <property type="gene ID" value="SP_0179"/>
</dbReference>
<dbReference type="KEGG" id="spn:SP_0179"/>
<dbReference type="eggNOG" id="COG0632">
    <property type="taxonomic scope" value="Bacteria"/>
</dbReference>
<dbReference type="PhylomeDB" id="Q97SY4"/>
<dbReference type="BioCyc" id="SPNE170187:G1FZB-187-MONOMER"/>
<dbReference type="Proteomes" id="UP000000585">
    <property type="component" value="Chromosome"/>
</dbReference>
<dbReference type="GO" id="GO:0005737">
    <property type="term" value="C:cytoplasm"/>
    <property type="evidence" value="ECO:0007669"/>
    <property type="project" value="UniProtKB-SubCell"/>
</dbReference>
<dbReference type="GO" id="GO:0009379">
    <property type="term" value="C:Holliday junction helicase complex"/>
    <property type="evidence" value="ECO:0007669"/>
    <property type="project" value="InterPro"/>
</dbReference>
<dbReference type="GO" id="GO:0048476">
    <property type="term" value="C:Holliday junction resolvase complex"/>
    <property type="evidence" value="ECO:0007669"/>
    <property type="project" value="UniProtKB-UniRule"/>
</dbReference>
<dbReference type="GO" id="GO:0005524">
    <property type="term" value="F:ATP binding"/>
    <property type="evidence" value="ECO:0007669"/>
    <property type="project" value="InterPro"/>
</dbReference>
<dbReference type="GO" id="GO:0000400">
    <property type="term" value="F:four-way junction DNA binding"/>
    <property type="evidence" value="ECO:0007669"/>
    <property type="project" value="UniProtKB-UniRule"/>
</dbReference>
<dbReference type="GO" id="GO:0009378">
    <property type="term" value="F:four-way junction helicase activity"/>
    <property type="evidence" value="ECO:0007669"/>
    <property type="project" value="InterPro"/>
</dbReference>
<dbReference type="GO" id="GO:0006310">
    <property type="term" value="P:DNA recombination"/>
    <property type="evidence" value="ECO:0007669"/>
    <property type="project" value="UniProtKB-UniRule"/>
</dbReference>
<dbReference type="GO" id="GO:0006281">
    <property type="term" value="P:DNA repair"/>
    <property type="evidence" value="ECO:0007669"/>
    <property type="project" value="UniProtKB-UniRule"/>
</dbReference>
<dbReference type="CDD" id="cd14332">
    <property type="entry name" value="UBA_RuvA_C"/>
    <property type="match status" value="1"/>
</dbReference>
<dbReference type="Gene3D" id="1.10.150.20">
    <property type="entry name" value="5' to 3' exonuclease, C-terminal subdomain"/>
    <property type="match status" value="1"/>
</dbReference>
<dbReference type="Gene3D" id="1.10.8.10">
    <property type="entry name" value="DNA helicase RuvA subunit, C-terminal domain"/>
    <property type="match status" value="1"/>
</dbReference>
<dbReference type="Gene3D" id="2.40.50.140">
    <property type="entry name" value="Nucleic acid-binding proteins"/>
    <property type="match status" value="1"/>
</dbReference>
<dbReference type="HAMAP" id="MF_00031">
    <property type="entry name" value="DNA_HJ_migration_RuvA"/>
    <property type="match status" value="1"/>
</dbReference>
<dbReference type="InterPro" id="IPR013849">
    <property type="entry name" value="DNA_helicase_Holl-junc_RuvA_I"/>
</dbReference>
<dbReference type="InterPro" id="IPR003583">
    <property type="entry name" value="Hlx-hairpin-Hlx_DNA-bd_motif"/>
</dbReference>
<dbReference type="InterPro" id="IPR012340">
    <property type="entry name" value="NA-bd_OB-fold"/>
</dbReference>
<dbReference type="InterPro" id="IPR000085">
    <property type="entry name" value="RuvA"/>
</dbReference>
<dbReference type="InterPro" id="IPR010994">
    <property type="entry name" value="RuvA_2-like"/>
</dbReference>
<dbReference type="InterPro" id="IPR011114">
    <property type="entry name" value="RuvA_C"/>
</dbReference>
<dbReference type="InterPro" id="IPR036267">
    <property type="entry name" value="RuvA_C_sf"/>
</dbReference>
<dbReference type="NCBIfam" id="TIGR00084">
    <property type="entry name" value="ruvA"/>
    <property type="match status" value="1"/>
</dbReference>
<dbReference type="Pfam" id="PF14520">
    <property type="entry name" value="HHH_5"/>
    <property type="match status" value="1"/>
</dbReference>
<dbReference type="Pfam" id="PF07499">
    <property type="entry name" value="RuvA_C"/>
    <property type="match status" value="1"/>
</dbReference>
<dbReference type="Pfam" id="PF01330">
    <property type="entry name" value="RuvA_N"/>
    <property type="match status" value="1"/>
</dbReference>
<dbReference type="SMART" id="SM00278">
    <property type="entry name" value="HhH1"/>
    <property type="match status" value="2"/>
</dbReference>
<dbReference type="SUPFAM" id="SSF46929">
    <property type="entry name" value="DNA helicase RuvA subunit, C-terminal domain"/>
    <property type="match status" value="1"/>
</dbReference>
<dbReference type="SUPFAM" id="SSF50249">
    <property type="entry name" value="Nucleic acid-binding proteins"/>
    <property type="match status" value="1"/>
</dbReference>
<dbReference type="SUPFAM" id="SSF47781">
    <property type="entry name" value="RuvA domain 2-like"/>
    <property type="match status" value="1"/>
</dbReference>